<proteinExistence type="inferred from homology"/>
<name>FIXA_ECO55</name>
<evidence type="ECO:0000255" key="1">
    <source>
        <dbReference type="HAMAP-Rule" id="MF_01055"/>
    </source>
</evidence>
<gene>
    <name evidence="1" type="primary">fixA</name>
    <name type="ordered locus">EC55989_0041</name>
</gene>
<comment type="function">
    <text evidence="1">Required for anaerobic carnitine reduction. May bring reductant to CaiA.</text>
</comment>
<comment type="pathway">
    <text evidence="1">Amine and polyamine metabolism; carnitine metabolism.</text>
</comment>
<comment type="subunit">
    <text evidence="1">Heterodimer of FixA and FixB.</text>
</comment>
<comment type="similarity">
    <text evidence="1">Belongs to the ETF beta-subunit/FixA family.</text>
</comment>
<reference key="1">
    <citation type="journal article" date="2009" name="PLoS Genet.">
        <title>Organised genome dynamics in the Escherichia coli species results in highly diverse adaptive paths.</title>
        <authorList>
            <person name="Touchon M."/>
            <person name="Hoede C."/>
            <person name="Tenaillon O."/>
            <person name="Barbe V."/>
            <person name="Baeriswyl S."/>
            <person name="Bidet P."/>
            <person name="Bingen E."/>
            <person name="Bonacorsi S."/>
            <person name="Bouchier C."/>
            <person name="Bouvet O."/>
            <person name="Calteau A."/>
            <person name="Chiapello H."/>
            <person name="Clermont O."/>
            <person name="Cruveiller S."/>
            <person name="Danchin A."/>
            <person name="Diard M."/>
            <person name="Dossat C."/>
            <person name="Karoui M.E."/>
            <person name="Frapy E."/>
            <person name="Garry L."/>
            <person name="Ghigo J.M."/>
            <person name="Gilles A.M."/>
            <person name="Johnson J."/>
            <person name="Le Bouguenec C."/>
            <person name="Lescat M."/>
            <person name="Mangenot S."/>
            <person name="Martinez-Jehanne V."/>
            <person name="Matic I."/>
            <person name="Nassif X."/>
            <person name="Oztas S."/>
            <person name="Petit M.A."/>
            <person name="Pichon C."/>
            <person name="Rouy Z."/>
            <person name="Ruf C.S."/>
            <person name="Schneider D."/>
            <person name="Tourret J."/>
            <person name="Vacherie B."/>
            <person name="Vallenet D."/>
            <person name="Medigue C."/>
            <person name="Rocha E.P.C."/>
            <person name="Denamur E."/>
        </authorList>
    </citation>
    <scope>NUCLEOTIDE SEQUENCE [LARGE SCALE GENOMIC DNA]</scope>
    <source>
        <strain>55989 / EAEC</strain>
    </source>
</reference>
<accession>B7L4G4</accession>
<feature type="chain" id="PRO_1000149636" description="Protein FixA">
    <location>
        <begin position="1"/>
        <end position="256"/>
    </location>
</feature>
<organism>
    <name type="scientific">Escherichia coli (strain 55989 / EAEC)</name>
    <dbReference type="NCBI Taxonomy" id="585055"/>
    <lineage>
        <taxon>Bacteria</taxon>
        <taxon>Pseudomonadati</taxon>
        <taxon>Pseudomonadota</taxon>
        <taxon>Gammaproteobacteria</taxon>
        <taxon>Enterobacterales</taxon>
        <taxon>Enterobacteriaceae</taxon>
        <taxon>Escherichia</taxon>
    </lineage>
</organism>
<protein>
    <recommendedName>
        <fullName evidence="1">Protein FixA</fullName>
    </recommendedName>
</protein>
<keyword id="KW-0249">Electron transport</keyword>
<keyword id="KW-1185">Reference proteome</keyword>
<keyword id="KW-0813">Transport</keyword>
<dbReference type="EMBL" id="CU928145">
    <property type="protein sequence ID" value="CAU95928.1"/>
    <property type="molecule type" value="Genomic_DNA"/>
</dbReference>
<dbReference type="RefSeq" id="WP_000692206.1">
    <property type="nucleotide sequence ID" value="NC_011748.1"/>
</dbReference>
<dbReference type="SMR" id="B7L4G4"/>
<dbReference type="KEGG" id="eck:EC55989_0041"/>
<dbReference type="HOGENOM" id="CLU_060196_2_2_6"/>
<dbReference type="UniPathway" id="UPA00117"/>
<dbReference type="Proteomes" id="UP000000746">
    <property type="component" value="Chromosome"/>
</dbReference>
<dbReference type="GO" id="GO:0009055">
    <property type="term" value="F:electron transfer activity"/>
    <property type="evidence" value="ECO:0007669"/>
    <property type="project" value="InterPro"/>
</dbReference>
<dbReference type="GO" id="GO:0009437">
    <property type="term" value="P:carnitine metabolic process"/>
    <property type="evidence" value="ECO:0007669"/>
    <property type="project" value="UniProtKB-UniRule"/>
</dbReference>
<dbReference type="CDD" id="cd01714">
    <property type="entry name" value="ETF_beta"/>
    <property type="match status" value="1"/>
</dbReference>
<dbReference type="FunFam" id="3.40.50.620:FF:000072">
    <property type="entry name" value="Protein FixA homolog"/>
    <property type="match status" value="1"/>
</dbReference>
<dbReference type="Gene3D" id="3.40.50.620">
    <property type="entry name" value="HUPs"/>
    <property type="match status" value="1"/>
</dbReference>
<dbReference type="HAMAP" id="MF_01055">
    <property type="entry name" value="FixA"/>
    <property type="match status" value="1"/>
</dbReference>
<dbReference type="InterPro" id="IPR000049">
    <property type="entry name" value="ET-Flavoprotein_bsu_CS"/>
</dbReference>
<dbReference type="InterPro" id="IPR014730">
    <property type="entry name" value="ETF_a/b_N"/>
</dbReference>
<dbReference type="InterPro" id="IPR012255">
    <property type="entry name" value="ETF_b"/>
</dbReference>
<dbReference type="InterPro" id="IPR033948">
    <property type="entry name" value="ETF_beta_N"/>
</dbReference>
<dbReference type="InterPro" id="IPR023463">
    <property type="entry name" value="FixA"/>
</dbReference>
<dbReference type="InterPro" id="IPR014729">
    <property type="entry name" value="Rossmann-like_a/b/a_fold"/>
</dbReference>
<dbReference type="NCBIfam" id="NF002888">
    <property type="entry name" value="PRK03359.1"/>
    <property type="match status" value="1"/>
</dbReference>
<dbReference type="PANTHER" id="PTHR21294">
    <property type="entry name" value="ELECTRON TRANSFER FLAVOPROTEIN BETA-SUBUNIT"/>
    <property type="match status" value="1"/>
</dbReference>
<dbReference type="PANTHER" id="PTHR21294:SF17">
    <property type="entry name" value="PROTEIN FIXA"/>
    <property type="match status" value="1"/>
</dbReference>
<dbReference type="Pfam" id="PF01012">
    <property type="entry name" value="ETF"/>
    <property type="match status" value="1"/>
</dbReference>
<dbReference type="PIRSF" id="PIRSF000090">
    <property type="entry name" value="Beta-ETF"/>
    <property type="match status" value="1"/>
</dbReference>
<dbReference type="SMART" id="SM00893">
    <property type="entry name" value="ETF"/>
    <property type="match status" value="1"/>
</dbReference>
<dbReference type="SUPFAM" id="SSF52402">
    <property type="entry name" value="Adenine nucleotide alpha hydrolases-like"/>
    <property type="match status" value="1"/>
</dbReference>
<dbReference type="PROSITE" id="PS01065">
    <property type="entry name" value="ETF_BETA"/>
    <property type="match status" value="1"/>
</dbReference>
<sequence>MKIITCYKCVPDEQDIAVNNADGSLDFSKADAKISQYDLNAIEAACQLKQQAAEAQVTALSVGGKALTNAKGRKDVLSRGPDELIVVIDDQFEQALPQQTASALAAAAQKAGFDLILCGDGSSDLYAQQVGLLVGEILNIPAVNGVSKIISLTADTLTVERELEDETETLSIPLPAVVAVSTDINSPQIPSMKAILGAAKKPVQVWSAADIGFNAVDAWSEQQVAAPKQRERQRIVIEGDGEEQIAAFAENLRKVI</sequence>